<comment type="function">
    <text evidence="1">Encapsidates the negative strand viral RNA, protecting it from nucleases. The encapsidated genomic RNA is termed the ribonucleoprotein (RNP) and serves as template for transcription and replication. The RNP needs to be localized in the host nucleus to start an infectious cycle, but is too large to diffuse through the nuclear pore complex. NP comprises at least 2 nuclear localization signals that are responsible for the active RNP import into the nucleus through cellular importin alpha/beta pathway. Later in the infection, nclear export of RNPs are mediated through viral proteins NEP interacting with M1 which binds nucleoproteins. It is possible that nucleoprotein binds directly host exportin-1/XPO1 and plays an active role in RNPs nuclear export. M1 interaction with RNP seems to hide nucleoprotein's nuclear localization signals. Soon after a virion infects a new cell, M1 dissociates from the RNP under acidification of the virion driven by M2 protein. Dissociation of M1 from RNP unmasks nucleoprotein's nuclear localization signals, targeting the RNP to the nucleus.</text>
</comment>
<comment type="subunit">
    <text evidence="1">Homomultimerizes to form the nucleocapsid. May bind host exportin-1/XPO1. Binds to viral genomic RNA. Protein-RNA contacts are mediated by a combination of electrostatic interactions between positively charged residues and the phosphate backbone and planar interactions between aromatic side chains and bases.</text>
</comment>
<comment type="subcellular location">
    <subcellularLocation>
        <location evidence="1">Virion</location>
    </subcellularLocation>
    <subcellularLocation>
        <location evidence="1">Host nucleus</location>
    </subcellularLocation>
</comment>
<comment type="PTM">
    <text evidence="1">Late in virus-infected cells, may be cleaved from a 56-kDa protein to a 53-kDa protein by a cellular caspase. This cleavage might be a marker for the onset of apoptosis in infected cells or have a specific function in virus host interaction.</text>
</comment>
<comment type="similarity">
    <text evidence="1">Belongs to the influenza viruses nucleoprotein family.</text>
</comment>
<dbReference type="EMBL" id="AY383753">
    <property type="protein sequence ID" value="AAQ90289.1"/>
    <property type="molecule type" value="mRNA"/>
</dbReference>
<dbReference type="SMR" id="Q6TXC0"/>
<dbReference type="GO" id="GO:0019029">
    <property type="term" value="C:helical viral capsid"/>
    <property type="evidence" value="ECO:0007669"/>
    <property type="project" value="UniProtKB-UniRule"/>
</dbReference>
<dbReference type="GO" id="GO:0043657">
    <property type="term" value="C:host cell"/>
    <property type="evidence" value="ECO:0007669"/>
    <property type="project" value="GOC"/>
</dbReference>
<dbReference type="GO" id="GO:0042025">
    <property type="term" value="C:host cell nucleus"/>
    <property type="evidence" value="ECO:0007669"/>
    <property type="project" value="UniProtKB-SubCell"/>
</dbReference>
<dbReference type="GO" id="GO:1990904">
    <property type="term" value="C:ribonucleoprotein complex"/>
    <property type="evidence" value="ECO:0007669"/>
    <property type="project" value="UniProtKB-KW"/>
</dbReference>
<dbReference type="GO" id="GO:0019013">
    <property type="term" value="C:viral nucleocapsid"/>
    <property type="evidence" value="ECO:0007669"/>
    <property type="project" value="UniProtKB-UniRule"/>
</dbReference>
<dbReference type="GO" id="GO:0003723">
    <property type="term" value="F:RNA binding"/>
    <property type="evidence" value="ECO:0007669"/>
    <property type="project" value="UniProtKB-UniRule"/>
</dbReference>
<dbReference type="GO" id="GO:0005198">
    <property type="term" value="F:structural molecule activity"/>
    <property type="evidence" value="ECO:0007669"/>
    <property type="project" value="UniProtKB-UniRule"/>
</dbReference>
<dbReference type="GO" id="GO:0046718">
    <property type="term" value="P:symbiont entry into host cell"/>
    <property type="evidence" value="ECO:0007669"/>
    <property type="project" value="UniProtKB-KW"/>
</dbReference>
<dbReference type="GO" id="GO:0075732">
    <property type="term" value="P:viral penetration into host nucleus"/>
    <property type="evidence" value="ECO:0007669"/>
    <property type="project" value="UniProtKB-UniRule"/>
</dbReference>
<dbReference type="HAMAP" id="MF_04070">
    <property type="entry name" value="INFV_NCAP"/>
    <property type="match status" value="1"/>
</dbReference>
<dbReference type="InterPro" id="IPR002141">
    <property type="entry name" value="Flu_NP"/>
</dbReference>
<dbReference type="Pfam" id="PF00506">
    <property type="entry name" value="Flu_NP"/>
    <property type="match status" value="1"/>
</dbReference>
<dbReference type="SUPFAM" id="SSF161003">
    <property type="entry name" value="flu NP-like"/>
    <property type="match status" value="1"/>
</dbReference>
<proteinExistence type="evidence at transcript level"/>
<keyword id="KW-0167">Capsid protein</keyword>
<keyword id="KW-1139">Helical capsid protein</keyword>
<keyword id="KW-1048">Host nucleus</keyword>
<keyword id="KW-0945">Host-virus interaction</keyword>
<keyword id="KW-0687">Ribonucleoprotein</keyword>
<keyword id="KW-0694">RNA-binding</keyword>
<keyword id="KW-0543">Viral nucleoprotein</keyword>
<keyword id="KW-1163">Viral penetration into host nucleus</keyword>
<keyword id="KW-0946">Virion</keyword>
<keyword id="KW-1160">Virus entry into host cell</keyword>
<evidence type="ECO:0000255" key="1">
    <source>
        <dbReference type="HAMAP-Rule" id="MF_04070"/>
    </source>
</evidence>
<evidence type="ECO:0000256" key="2">
    <source>
        <dbReference type="SAM" id="MobiDB-lite"/>
    </source>
</evidence>
<organismHost>
    <name type="scientific">Aves</name>
    <dbReference type="NCBI Taxonomy" id="8782"/>
</organismHost>
<organismHost>
    <name type="scientific">Equus caballus</name>
    <name type="common">Horse</name>
    <dbReference type="NCBI Taxonomy" id="9796"/>
</organismHost>
<accession>Q6TXC0</accession>
<feature type="chain" id="PRO_0000265110" description="Nucleoprotein">
    <location>
        <begin position="1"/>
        <end position="498"/>
    </location>
</feature>
<feature type="region of interest" description="Disordered" evidence="2">
    <location>
        <begin position="1"/>
        <end position="21"/>
    </location>
</feature>
<feature type="short sequence motif" description="Unconventional nuclear localization signal" evidence="1">
    <location>
        <begin position="1"/>
        <end position="18"/>
    </location>
</feature>
<feature type="short sequence motif" description="Bipartite nuclear localization signal" evidence="1">
    <location>
        <begin position="198"/>
        <end position="216"/>
    </location>
</feature>
<organism>
    <name type="scientific">Influenza A virus (strain A/Equine/Santiago/1/1985 H3N8)</name>
    <dbReference type="NCBI Taxonomy" id="11414"/>
    <lineage>
        <taxon>Viruses</taxon>
        <taxon>Riboviria</taxon>
        <taxon>Orthornavirae</taxon>
        <taxon>Negarnaviricota</taxon>
        <taxon>Polyploviricotina</taxon>
        <taxon>Insthoviricetes</taxon>
        <taxon>Articulavirales</taxon>
        <taxon>Orthomyxoviridae</taxon>
        <taxon>Alphainfluenzavirus</taxon>
        <taxon>Alphainfluenzavirus influenzae</taxon>
        <taxon>Influenza A virus</taxon>
    </lineage>
</organism>
<gene>
    <name evidence="1" type="primary">NP</name>
</gene>
<sequence>MASQGTKRSYEQMETGGERQNATEIRASVGRMVGGIGRFYVQMCTELKLNDHEGRLIQNSITIERMVLSAFDERRNKYLEEHPSAGKDPKKTGGPIYRRKDGKWMRELILHDKEEIMRIWRQANNGEDATAGLTHMMIWHSNLNDTTYQRTRALVRAGMDPRMCSLMQGSTLPRRSGAAGAAVKGVGTMVMELIRMIKRGINDRNFWRGENGRRTRIAYERMCNILKGKFQTAAQRAMMDQVRESRNPGNAEIEDLIFLTRSALILRGSVAHKSCLPACVYGLAVASGYDFEKEGYSLVGIDPFKLLQNSQIFSLIRPKENPAHKSQLVWMACHSAAFEDLRVLNFIRGTKVIPRGQLATRGVQIASNENMETIDSSTLELRSRYWAIRTRSGGNTSQQRASAGQISVQPTFSVQRNLPFERATIMAAFTGNTEGRTSDMRTEIIRMMENARSEDVSFQGRGVFELSDEKATNPIVPSFDMSNEGSYFFGDNAEEFDS</sequence>
<reference key="1">
    <citation type="journal article" date="2005" name="Biol. Res.">
        <title>Isolation, sequencing and phylogenetic analysis of the hemagglutinin, neuraminidase and nucleoprotein genes of the Chilean equine influenza virus subtypes H7N7 and H3N8.</title>
        <authorList>
            <person name="Muller I."/>
            <person name="Jaureguiberry B."/>
            <person name="Valenzuela P.D.T."/>
        </authorList>
    </citation>
    <scope>NUCLEOTIDE SEQUENCE [GENOMIC RNA]</scope>
</reference>
<name>NCAP_I85A5</name>
<protein>
    <recommendedName>
        <fullName evidence="1">Nucleoprotein</fullName>
    </recommendedName>
    <alternativeName>
        <fullName evidence="1">Nucleocapsid protein</fullName>
        <shortName evidence="1">Protein N</shortName>
    </alternativeName>
</protein>